<organism>
    <name type="scientific">Yersinia pestis</name>
    <dbReference type="NCBI Taxonomy" id="632"/>
    <lineage>
        <taxon>Bacteria</taxon>
        <taxon>Pseudomonadati</taxon>
        <taxon>Pseudomonadota</taxon>
        <taxon>Gammaproteobacteria</taxon>
        <taxon>Enterobacterales</taxon>
        <taxon>Yersiniaceae</taxon>
        <taxon>Yersinia</taxon>
    </lineage>
</organism>
<accession>Q8ZB72</accession>
<accession>Q0WB99</accession>
<dbReference type="EC" id="2.4.99.28" evidence="1"/>
<dbReference type="EMBL" id="AL590842">
    <property type="protein sequence ID" value="CAL22140.1"/>
    <property type="molecule type" value="Genomic_DNA"/>
</dbReference>
<dbReference type="EMBL" id="AE009952">
    <property type="protein sequence ID" value="AAM83718.1"/>
    <property type="molecule type" value="Genomic_DNA"/>
</dbReference>
<dbReference type="EMBL" id="AE017042">
    <property type="protein sequence ID" value="AAS63953.1"/>
    <property type="molecule type" value="Genomic_DNA"/>
</dbReference>
<dbReference type="PIR" id="AI0431">
    <property type="entry name" value="AI0431"/>
</dbReference>
<dbReference type="RefSeq" id="WP_002210144.1">
    <property type="nucleotide sequence ID" value="NZ_WUCM01000069.1"/>
</dbReference>
<dbReference type="RefSeq" id="YP_002348439.1">
    <property type="nucleotide sequence ID" value="NC_003143.1"/>
</dbReference>
<dbReference type="SMR" id="Q8ZB72"/>
<dbReference type="STRING" id="214092.YPO3552"/>
<dbReference type="CAZy" id="GT51">
    <property type="family name" value="Glycosyltransferase Family 51"/>
</dbReference>
<dbReference type="PaxDb" id="214092-YPO3552"/>
<dbReference type="DNASU" id="1145071"/>
<dbReference type="EnsemblBacteria" id="AAS63953">
    <property type="protein sequence ID" value="AAS63953"/>
    <property type="gene ID" value="YP_3806"/>
</dbReference>
<dbReference type="GeneID" id="57975163"/>
<dbReference type="KEGG" id="ype:YPO3552"/>
<dbReference type="KEGG" id="ypk:y0124"/>
<dbReference type="KEGG" id="ypm:YP_3806"/>
<dbReference type="PATRIC" id="fig|214092.21.peg.4046"/>
<dbReference type="eggNOG" id="COG0744">
    <property type="taxonomic scope" value="Bacteria"/>
</dbReference>
<dbReference type="HOGENOM" id="CLU_006354_1_1_6"/>
<dbReference type="OMA" id="PAPKCFD"/>
<dbReference type="OrthoDB" id="9766909at2"/>
<dbReference type="UniPathway" id="UPA00219"/>
<dbReference type="Proteomes" id="UP000000815">
    <property type="component" value="Chromosome"/>
</dbReference>
<dbReference type="Proteomes" id="UP000001019">
    <property type="component" value="Chromosome"/>
</dbReference>
<dbReference type="Proteomes" id="UP000002490">
    <property type="component" value="Chromosome"/>
</dbReference>
<dbReference type="GO" id="GO:0009274">
    <property type="term" value="C:peptidoglycan-based cell wall"/>
    <property type="evidence" value="ECO:0007669"/>
    <property type="project" value="InterPro"/>
</dbReference>
<dbReference type="GO" id="GO:0005886">
    <property type="term" value="C:plasma membrane"/>
    <property type="evidence" value="ECO:0000318"/>
    <property type="project" value="GO_Central"/>
</dbReference>
<dbReference type="GO" id="GO:0016763">
    <property type="term" value="F:pentosyltransferase activity"/>
    <property type="evidence" value="ECO:0007669"/>
    <property type="project" value="InterPro"/>
</dbReference>
<dbReference type="GO" id="GO:0008955">
    <property type="term" value="F:peptidoglycan glycosyltransferase activity"/>
    <property type="evidence" value="ECO:0000318"/>
    <property type="project" value="GO_Central"/>
</dbReference>
<dbReference type="GO" id="GO:0071555">
    <property type="term" value="P:cell wall organization"/>
    <property type="evidence" value="ECO:0007669"/>
    <property type="project" value="UniProtKB-KW"/>
</dbReference>
<dbReference type="GO" id="GO:0009252">
    <property type="term" value="P:peptidoglycan biosynthetic process"/>
    <property type="evidence" value="ECO:0000318"/>
    <property type="project" value="GO_Central"/>
</dbReference>
<dbReference type="GO" id="GO:0008360">
    <property type="term" value="P:regulation of cell shape"/>
    <property type="evidence" value="ECO:0007669"/>
    <property type="project" value="UniProtKB-KW"/>
</dbReference>
<dbReference type="Gene3D" id="1.10.3810.10">
    <property type="entry name" value="Biosynthetic peptidoglycan transglycosylase-like"/>
    <property type="match status" value="1"/>
</dbReference>
<dbReference type="HAMAP" id="MF_00766">
    <property type="entry name" value="PGT_MtgA"/>
    <property type="match status" value="1"/>
</dbReference>
<dbReference type="InterPro" id="IPR001264">
    <property type="entry name" value="Glyco_trans_51"/>
</dbReference>
<dbReference type="InterPro" id="IPR023346">
    <property type="entry name" value="Lysozyme-like_dom_sf"/>
</dbReference>
<dbReference type="InterPro" id="IPR036950">
    <property type="entry name" value="PBP_transglycosylase"/>
</dbReference>
<dbReference type="InterPro" id="IPR011812">
    <property type="entry name" value="Pep_trsgly"/>
</dbReference>
<dbReference type="NCBIfam" id="TIGR02070">
    <property type="entry name" value="mono_pep_trsgly"/>
    <property type="match status" value="1"/>
</dbReference>
<dbReference type="PANTHER" id="PTHR30400:SF0">
    <property type="entry name" value="BIOSYNTHETIC PEPTIDOGLYCAN TRANSGLYCOSYLASE"/>
    <property type="match status" value="1"/>
</dbReference>
<dbReference type="PANTHER" id="PTHR30400">
    <property type="entry name" value="MONOFUNCTIONAL BIOSYNTHETIC PEPTIDOGLYCAN TRANSGLYCOSYLASE"/>
    <property type="match status" value="1"/>
</dbReference>
<dbReference type="Pfam" id="PF00912">
    <property type="entry name" value="Transgly"/>
    <property type="match status" value="1"/>
</dbReference>
<dbReference type="SUPFAM" id="SSF53955">
    <property type="entry name" value="Lysozyme-like"/>
    <property type="match status" value="1"/>
</dbReference>
<feature type="chain" id="PRO_0000083151" description="Biosynthetic peptidoglycan transglycosylase">
    <location>
        <begin position="1"/>
        <end position="241"/>
    </location>
</feature>
<feature type="transmembrane region" description="Helical" evidence="1">
    <location>
        <begin position="18"/>
        <end position="38"/>
    </location>
</feature>
<gene>
    <name evidence="1" type="primary">mtgA</name>
    <name type="ordered locus">YPO3552</name>
    <name type="ordered locus">y0124</name>
    <name type="ordered locus">YP_3806</name>
</gene>
<protein>
    <recommendedName>
        <fullName evidence="1">Biosynthetic peptidoglycan transglycosylase</fullName>
        <ecNumber evidence="1">2.4.99.28</ecNumber>
    </recommendedName>
    <alternativeName>
        <fullName evidence="1">Glycan polymerase</fullName>
    </alternativeName>
    <alternativeName>
        <fullName evidence="1">Peptidoglycan glycosyltransferase MtgA</fullName>
        <shortName evidence="1">PGT</shortName>
    </alternativeName>
</protein>
<name>MTGA_YERPE</name>
<sequence length="241" mass="27096">MISVRRGFSQLWYWGKRGVIGIIALWMAGILIFAFLPVPFSMVMIERQLGAWLTGDFAYVAHSDWVPMDEISPYMALAVMAAEDQKFPDHWGFDVGAIESALSHNQRNQKRIRGASTLSQQTAKNVFLWDGRSWVRKGLEVGLTAGIELIWTKRRILTVYLNIAEFGNGIFGVEAAARHFFNKPASKLSASEAALLAAVLPNPLRFKVNAPSGYVISRQQWILRQMHQLGGKTFLQENTLD</sequence>
<evidence type="ECO:0000255" key="1">
    <source>
        <dbReference type="HAMAP-Rule" id="MF_00766"/>
    </source>
</evidence>
<proteinExistence type="inferred from homology"/>
<comment type="function">
    <text evidence="1">Peptidoglycan polymerase that catalyzes glycan chain elongation from lipid-linked precursors.</text>
</comment>
<comment type="catalytic activity">
    <reaction evidence="1">
        <text>[GlcNAc-(1-&gt;4)-Mur2Ac(oyl-L-Ala-gamma-D-Glu-L-Lys-D-Ala-D-Ala)](n)-di-trans,octa-cis-undecaprenyl diphosphate + beta-D-GlcNAc-(1-&gt;4)-Mur2Ac(oyl-L-Ala-gamma-D-Glu-L-Lys-D-Ala-D-Ala)-di-trans,octa-cis-undecaprenyl diphosphate = [GlcNAc-(1-&gt;4)-Mur2Ac(oyl-L-Ala-gamma-D-Glu-L-Lys-D-Ala-D-Ala)](n+1)-di-trans,octa-cis-undecaprenyl diphosphate + di-trans,octa-cis-undecaprenyl diphosphate + H(+)</text>
        <dbReference type="Rhea" id="RHEA:23708"/>
        <dbReference type="Rhea" id="RHEA-COMP:9602"/>
        <dbReference type="Rhea" id="RHEA-COMP:9603"/>
        <dbReference type="ChEBI" id="CHEBI:15378"/>
        <dbReference type="ChEBI" id="CHEBI:58405"/>
        <dbReference type="ChEBI" id="CHEBI:60033"/>
        <dbReference type="ChEBI" id="CHEBI:78435"/>
        <dbReference type="EC" id="2.4.99.28"/>
    </reaction>
</comment>
<comment type="pathway">
    <text evidence="1">Cell wall biogenesis; peptidoglycan biosynthesis.</text>
</comment>
<comment type="subcellular location">
    <subcellularLocation>
        <location evidence="1">Cell inner membrane</location>
        <topology evidence="1">Single-pass membrane protein</topology>
    </subcellularLocation>
</comment>
<comment type="similarity">
    <text evidence="1">Belongs to the glycosyltransferase 51 family.</text>
</comment>
<reference key="1">
    <citation type="journal article" date="2001" name="Nature">
        <title>Genome sequence of Yersinia pestis, the causative agent of plague.</title>
        <authorList>
            <person name="Parkhill J."/>
            <person name="Wren B.W."/>
            <person name="Thomson N.R."/>
            <person name="Titball R.W."/>
            <person name="Holden M.T.G."/>
            <person name="Prentice M.B."/>
            <person name="Sebaihia M."/>
            <person name="James K.D."/>
            <person name="Churcher C.M."/>
            <person name="Mungall K.L."/>
            <person name="Baker S."/>
            <person name="Basham D."/>
            <person name="Bentley S.D."/>
            <person name="Brooks K."/>
            <person name="Cerdeno-Tarraga A.-M."/>
            <person name="Chillingworth T."/>
            <person name="Cronin A."/>
            <person name="Davies R.M."/>
            <person name="Davis P."/>
            <person name="Dougan G."/>
            <person name="Feltwell T."/>
            <person name="Hamlin N."/>
            <person name="Holroyd S."/>
            <person name="Jagels K."/>
            <person name="Karlyshev A.V."/>
            <person name="Leather S."/>
            <person name="Moule S."/>
            <person name="Oyston P.C.F."/>
            <person name="Quail M.A."/>
            <person name="Rutherford K.M."/>
            <person name="Simmonds M."/>
            <person name="Skelton J."/>
            <person name="Stevens K."/>
            <person name="Whitehead S."/>
            <person name="Barrell B.G."/>
        </authorList>
    </citation>
    <scope>NUCLEOTIDE SEQUENCE [LARGE SCALE GENOMIC DNA]</scope>
    <source>
        <strain>CO-92 / Biovar Orientalis</strain>
    </source>
</reference>
<reference key="2">
    <citation type="journal article" date="2002" name="J. Bacteriol.">
        <title>Genome sequence of Yersinia pestis KIM.</title>
        <authorList>
            <person name="Deng W."/>
            <person name="Burland V."/>
            <person name="Plunkett G. III"/>
            <person name="Boutin A."/>
            <person name="Mayhew G.F."/>
            <person name="Liss P."/>
            <person name="Perna N.T."/>
            <person name="Rose D.J."/>
            <person name="Mau B."/>
            <person name="Zhou S."/>
            <person name="Schwartz D.C."/>
            <person name="Fetherston J.D."/>
            <person name="Lindler L.E."/>
            <person name="Brubaker R.R."/>
            <person name="Plano G.V."/>
            <person name="Straley S.C."/>
            <person name="McDonough K.A."/>
            <person name="Nilles M.L."/>
            <person name="Matson J.S."/>
            <person name="Blattner F.R."/>
            <person name="Perry R.D."/>
        </authorList>
    </citation>
    <scope>NUCLEOTIDE SEQUENCE [LARGE SCALE GENOMIC DNA]</scope>
    <source>
        <strain>KIM10+ / Biovar Mediaevalis</strain>
    </source>
</reference>
<reference key="3">
    <citation type="journal article" date="2004" name="DNA Res.">
        <title>Complete genome sequence of Yersinia pestis strain 91001, an isolate avirulent to humans.</title>
        <authorList>
            <person name="Song Y."/>
            <person name="Tong Z."/>
            <person name="Wang J."/>
            <person name="Wang L."/>
            <person name="Guo Z."/>
            <person name="Han Y."/>
            <person name="Zhang J."/>
            <person name="Pei D."/>
            <person name="Zhou D."/>
            <person name="Qin H."/>
            <person name="Pang X."/>
            <person name="Han Y."/>
            <person name="Zhai J."/>
            <person name="Li M."/>
            <person name="Cui B."/>
            <person name="Qi Z."/>
            <person name="Jin L."/>
            <person name="Dai R."/>
            <person name="Chen F."/>
            <person name="Li S."/>
            <person name="Ye C."/>
            <person name="Du Z."/>
            <person name="Lin W."/>
            <person name="Wang J."/>
            <person name="Yu J."/>
            <person name="Yang H."/>
            <person name="Wang J."/>
            <person name="Huang P."/>
            <person name="Yang R."/>
        </authorList>
    </citation>
    <scope>NUCLEOTIDE SEQUENCE [LARGE SCALE GENOMIC DNA]</scope>
    <source>
        <strain>91001 / Biovar Mediaevalis</strain>
    </source>
</reference>
<keyword id="KW-0997">Cell inner membrane</keyword>
<keyword id="KW-1003">Cell membrane</keyword>
<keyword id="KW-0133">Cell shape</keyword>
<keyword id="KW-0961">Cell wall biogenesis/degradation</keyword>
<keyword id="KW-0328">Glycosyltransferase</keyword>
<keyword id="KW-0472">Membrane</keyword>
<keyword id="KW-0573">Peptidoglycan synthesis</keyword>
<keyword id="KW-1185">Reference proteome</keyword>
<keyword id="KW-0808">Transferase</keyword>
<keyword id="KW-0812">Transmembrane</keyword>
<keyword id="KW-1133">Transmembrane helix</keyword>